<gene>
    <name evidence="32" type="primary">Prkaa2</name>
</gene>
<feature type="chain" id="PRO_0000262957" description="5'-AMP-activated protein kinase catalytic subunit alpha-2">
    <location>
        <begin position="1"/>
        <end position="552"/>
    </location>
</feature>
<feature type="domain" description="Protein kinase" evidence="5">
    <location>
        <begin position="16"/>
        <end position="268"/>
    </location>
</feature>
<feature type="region of interest" description="AIS" evidence="4">
    <location>
        <begin position="291"/>
        <end position="376"/>
    </location>
</feature>
<feature type="active site" description="Proton acceptor" evidence="1 5 6">
    <location>
        <position position="139"/>
    </location>
</feature>
<feature type="binding site" evidence="1 5">
    <location>
        <begin position="22"/>
        <end position="30"/>
    </location>
    <ligand>
        <name>ATP</name>
        <dbReference type="ChEBI" id="CHEBI:30616"/>
    </ligand>
</feature>
<feature type="binding site">
    <location>
        <position position="45"/>
    </location>
    <ligand>
        <name>ATP</name>
        <dbReference type="ChEBI" id="CHEBI:30616"/>
    </ligand>
</feature>
<feature type="modified residue" description="Phosphothreonine; by LKB1 and CaMKK2" evidence="9 11 25 26">
    <location>
        <position position="172"/>
    </location>
</feature>
<feature type="modified residue" description="Phosphothreonine" evidence="3">
    <location>
        <position position="258"/>
    </location>
</feature>
<feature type="modified residue" description="Phosphoserine" evidence="33 34">
    <location>
        <position position="377"/>
    </location>
</feature>
<feature type="modified residue" description="Phosphoserine" evidence="3">
    <location>
        <position position="491"/>
    </location>
</feature>
<feature type="mutagenesis site" description="Loss of kinase activity." evidence="22">
    <original>K</original>
    <variation>A</variation>
    <location>
        <position position="45"/>
    </location>
</feature>
<feature type="mutagenesis site" description="Loss of kinase activity." evidence="19">
    <original>D</original>
    <variation>A</variation>
    <location>
        <position position="157"/>
    </location>
</feature>
<feature type="sequence conflict" description="In Ref. 3; BAE22188." evidence="29" ref="3">
    <original>H</original>
    <variation>D</variation>
    <location>
        <position position="15"/>
    </location>
</feature>
<feature type="sequence conflict" description="In Ref. 3; BAC31746." evidence="29" ref="3">
    <original>D</original>
    <variation>V</variation>
    <location>
        <position position="289"/>
    </location>
</feature>
<feature type="sequence conflict" description="In Ref. 3; BAE22188." evidence="29" ref="3">
    <original>A</original>
    <variation>E</variation>
    <location>
        <position position="380"/>
    </location>
</feature>
<feature type="sequence conflict" description="In Ref. 3; BAE22188." evidence="29" ref="3">
    <original>F</original>
    <variation>Y</variation>
    <location>
        <position position="502"/>
    </location>
</feature>
<feature type="sequence conflict" description="In Ref. 3; BAE22188." evidence="29" ref="3">
    <original>T</original>
    <variation>K</variation>
    <location>
        <position position="506"/>
    </location>
</feature>
<evidence type="ECO:0000250" key="1">
    <source>
        <dbReference type="UniProtKB" id="P28523"/>
    </source>
</evidence>
<evidence type="ECO:0000250" key="2">
    <source>
        <dbReference type="UniProtKB" id="P54646"/>
    </source>
</evidence>
<evidence type="ECO:0000250" key="3">
    <source>
        <dbReference type="UniProtKB" id="Q09137"/>
    </source>
</evidence>
<evidence type="ECO:0000250" key="4">
    <source>
        <dbReference type="UniProtKB" id="Q13131"/>
    </source>
</evidence>
<evidence type="ECO:0000255" key="5">
    <source>
        <dbReference type="PROSITE-ProRule" id="PRU00159"/>
    </source>
</evidence>
<evidence type="ECO:0000255" key="6">
    <source>
        <dbReference type="PROSITE-ProRule" id="PRU10027"/>
    </source>
</evidence>
<evidence type="ECO:0000269" key="7">
    <source>
    </source>
</evidence>
<evidence type="ECO:0000269" key="8">
    <source>
    </source>
</evidence>
<evidence type="ECO:0000269" key="9">
    <source>
    </source>
</evidence>
<evidence type="ECO:0000269" key="10">
    <source>
    </source>
</evidence>
<evidence type="ECO:0000269" key="11">
    <source>
    </source>
</evidence>
<evidence type="ECO:0000269" key="12">
    <source>
    </source>
</evidence>
<evidence type="ECO:0000269" key="13">
    <source>
    </source>
</evidence>
<evidence type="ECO:0000269" key="14">
    <source>
    </source>
</evidence>
<evidence type="ECO:0000269" key="15">
    <source>
    </source>
</evidence>
<evidence type="ECO:0000269" key="16">
    <source>
    </source>
</evidence>
<evidence type="ECO:0000269" key="17">
    <source>
    </source>
</evidence>
<evidence type="ECO:0000269" key="18">
    <source>
    </source>
</evidence>
<evidence type="ECO:0000269" key="19">
    <source>
    </source>
</evidence>
<evidence type="ECO:0000269" key="20">
    <source>
    </source>
</evidence>
<evidence type="ECO:0000269" key="21">
    <source>
    </source>
</evidence>
<evidence type="ECO:0000269" key="22">
    <source>
    </source>
</evidence>
<evidence type="ECO:0000269" key="23">
    <source>
    </source>
</evidence>
<evidence type="ECO:0000269" key="24">
    <source>
    </source>
</evidence>
<evidence type="ECO:0000269" key="25">
    <source>
    </source>
</evidence>
<evidence type="ECO:0000269" key="26">
    <source>
    </source>
</evidence>
<evidence type="ECO:0000269" key="27">
    <source>
    </source>
</evidence>
<evidence type="ECO:0000269" key="28">
    <source>
    </source>
</evidence>
<evidence type="ECO:0000305" key="29"/>
<evidence type="ECO:0000312" key="30">
    <source>
        <dbReference type="EMBL" id="BAC31746.1"/>
    </source>
</evidence>
<evidence type="ECO:0000312" key="31">
    <source>
        <dbReference type="EMBL" id="BAE22188.1"/>
    </source>
</evidence>
<evidence type="ECO:0000312" key="32">
    <source>
        <dbReference type="MGI" id="MGI:1336173"/>
    </source>
</evidence>
<evidence type="ECO:0007744" key="33">
    <source>
    </source>
</evidence>
<evidence type="ECO:0007744" key="34">
    <source>
    </source>
</evidence>
<sequence length="552" mass="62022">MAEKQKHDGRVKIGHYVLGDTLGVGTFGKVKIGEHQLTGHKVAVKILNRQKIRSLDVVGKIKREIQNLKLFRHPHIIKLYQVISTPTDFFMVMEYVSGGELFDYICKHGRVEEVEARRLFQQILSAVDYCHRHMVVHRDLKPENVLLDAQMNAKIADFGLSNMMSDGEFLRTSCGSPNYAAPEVISGRLYAGPEVDIWSCGVILYALLCGTLPFDDEHVPTLFKKIRGGVFYIPDYLNRSVATLLMHMLQVDPLKRATIKDIREHEWFKQDLPSYLFPEDPSYDANVIDDEAVKEVCEKFECTESEVMNSLYSGDPQDQLAVAYHLIIDNRRIMNQASEFYLASSPPSGSFMDDSAMHIPPGLKPHPERMPPLIADSPKARCPLDALNTTKPKSLAVKKAKWHLGIRSQSKACDIMAEVYRAMKQLGFEWKVVNAYHLRVRRKNPVTGNYVKMSLQLYLVDSRSYLLDFKSIDDEVVEQRSGSSTPQRSCSAAGLHRARSSFDSSTAENHSLSGSLTGSLTGSTLSSASPRLGSHTMDFFEMCASLITALAR</sequence>
<proteinExistence type="evidence at protein level"/>
<dbReference type="EC" id="2.7.11.1" evidence="3"/>
<dbReference type="EC" id="2.7.11.31" evidence="3"/>
<dbReference type="EMBL" id="AL627307">
    <property type="status" value="NOT_ANNOTATED_CDS"/>
    <property type="molecule type" value="Genomic_DNA"/>
</dbReference>
<dbReference type="EMBL" id="AL929466">
    <property type="status" value="NOT_ANNOTATED_CDS"/>
    <property type="molecule type" value="Genomic_DNA"/>
</dbReference>
<dbReference type="EMBL" id="BC138565">
    <property type="protein sequence ID" value="AAI38566.1"/>
    <property type="molecule type" value="mRNA"/>
</dbReference>
<dbReference type="EMBL" id="BC138566">
    <property type="protein sequence ID" value="AAI38567.1"/>
    <property type="molecule type" value="mRNA"/>
</dbReference>
<dbReference type="EMBL" id="AK044030">
    <property type="protein sequence ID" value="BAC31746.1"/>
    <property type="molecule type" value="mRNA"/>
</dbReference>
<dbReference type="EMBL" id="AK134573">
    <property type="protein sequence ID" value="BAE22188.1"/>
    <property type="molecule type" value="mRNA"/>
</dbReference>
<dbReference type="CCDS" id="CCDS18416.1"/>
<dbReference type="RefSeq" id="NP_835279.2">
    <property type="nucleotide sequence ID" value="NM_178143.2"/>
</dbReference>
<dbReference type="BMRB" id="Q8BRK8"/>
<dbReference type="SMR" id="Q8BRK8"/>
<dbReference type="BioGRID" id="223817">
    <property type="interactions" value="3"/>
</dbReference>
<dbReference type="ComplexPortal" id="CPX-5851">
    <property type="entry name" value="AMPK complex, alpha2-beta2-gamma1 variant"/>
</dbReference>
<dbReference type="ComplexPortal" id="CPX-5852">
    <property type="entry name" value="AMPK complex, alpha2-beta1-gamma1 variant"/>
</dbReference>
<dbReference type="ComplexPortal" id="CPX-5854">
    <property type="entry name" value="AMPK complex, alpha2-beta2-gamma3 variant"/>
</dbReference>
<dbReference type="ComplexPortal" id="CPX-5857">
    <property type="entry name" value="AMPK complex, alpha2-beta1-gamma3 variant"/>
</dbReference>
<dbReference type="ComplexPortal" id="CPX-5858">
    <property type="entry name" value="AMPK complex, alpha2-beta1-gamma2 variant"/>
</dbReference>
<dbReference type="ComplexPortal" id="CPX-5859">
    <property type="entry name" value="AMPK complex, alpha2-beta2-gamma2 variant"/>
</dbReference>
<dbReference type="FunCoup" id="Q8BRK8">
    <property type="interactions" value="1683"/>
</dbReference>
<dbReference type="IntAct" id="Q8BRK8">
    <property type="interactions" value="2"/>
</dbReference>
<dbReference type="STRING" id="10090.ENSMUSP00000030243"/>
<dbReference type="BindingDB" id="Q8BRK8"/>
<dbReference type="ChEMBL" id="CHEMBL1255154"/>
<dbReference type="GlyGen" id="Q8BRK8">
    <property type="glycosylation" value="1 site, 1 O-linked glycan (1 site)"/>
</dbReference>
<dbReference type="iPTMnet" id="Q8BRK8"/>
<dbReference type="PhosphoSitePlus" id="Q8BRK8"/>
<dbReference type="SwissPalm" id="Q8BRK8"/>
<dbReference type="jPOST" id="Q8BRK8"/>
<dbReference type="PaxDb" id="10090-ENSMUSP00000030243"/>
<dbReference type="PeptideAtlas" id="Q8BRK8"/>
<dbReference type="ProteomicsDB" id="296467"/>
<dbReference type="Antibodypedia" id="3399">
    <property type="antibodies" value="832 antibodies from 44 providers"/>
</dbReference>
<dbReference type="DNASU" id="108079"/>
<dbReference type="Ensembl" id="ENSMUST00000030243.8">
    <property type="protein sequence ID" value="ENSMUSP00000030243.8"/>
    <property type="gene ID" value="ENSMUSG00000028518.9"/>
</dbReference>
<dbReference type="GeneID" id="108079"/>
<dbReference type="KEGG" id="mmu:108079"/>
<dbReference type="UCSC" id="uc008tyd.2">
    <property type="organism name" value="mouse"/>
</dbReference>
<dbReference type="AGR" id="MGI:1336173"/>
<dbReference type="CTD" id="5563"/>
<dbReference type="MGI" id="MGI:1336173">
    <property type="gene designation" value="Prkaa2"/>
</dbReference>
<dbReference type="VEuPathDB" id="HostDB:ENSMUSG00000028518"/>
<dbReference type="eggNOG" id="KOG0583">
    <property type="taxonomic scope" value="Eukaryota"/>
</dbReference>
<dbReference type="GeneTree" id="ENSGT00940000156945"/>
<dbReference type="HOGENOM" id="CLU_000288_59_3_1"/>
<dbReference type="InParanoid" id="Q8BRK8"/>
<dbReference type="OMA" id="SKTKWHF"/>
<dbReference type="OrthoDB" id="193931at2759"/>
<dbReference type="PhylomeDB" id="Q8BRK8"/>
<dbReference type="TreeFam" id="TF314032"/>
<dbReference type="BRENDA" id="2.7.11.27">
    <property type="organism ID" value="3474"/>
</dbReference>
<dbReference type="Reactome" id="R-MMU-1632852">
    <property type="pathway name" value="Macroautophagy"/>
</dbReference>
<dbReference type="Reactome" id="R-MMU-163680">
    <property type="pathway name" value="AMPK inhibits chREBP transcriptional activation activity"/>
</dbReference>
<dbReference type="Reactome" id="R-MMU-200425">
    <property type="pathway name" value="Carnitine shuttle"/>
</dbReference>
<dbReference type="Reactome" id="R-MMU-380972">
    <property type="pathway name" value="Energy dependent regulation of mTOR by LKB1-AMPK"/>
</dbReference>
<dbReference type="Reactome" id="R-MMU-5628897">
    <property type="pathway name" value="TP53 Regulates Metabolic Genes"/>
</dbReference>
<dbReference type="Reactome" id="R-MMU-6804756">
    <property type="pathway name" value="Regulation of TP53 Activity through Phosphorylation"/>
</dbReference>
<dbReference type="Reactome" id="R-MMU-9759194">
    <property type="pathway name" value="Nuclear events mediated by NFE2L2"/>
</dbReference>
<dbReference type="BioGRID-ORCS" id="108079">
    <property type="hits" value="2 hits in 88 CRISPR screens"/>
</dbReference>
<dbReference type="ChiTaRS" id="Prkaa2">
    <property type="organism name" value="mouse"/>
</dbReference>
<dbReference type="PRO" id="PR:Q8BRK8"/>
<dbReference type="Proteomes" id="UP000000589">
    <property type="component" value="Chromosome 4"/>
</dbReference>
<dbReference type="RNAct" id="Q8BRK8">
    <property type="molecule type" value="protein"/>
</dbReference>
<dbReference type="Bgee" id="ENSMUSG00000028518">
    <property type="expression patterns" value="Expressed in triceps brachii and 193 other cell types or tissues"/>
</dbReference>
<dbReference type="GO" id="GO:0030424">
    <property type="term" value="C:axon"/>
    <property type="evidence" value="ECO:0000316"/>
    <property type="project" value="ARUK-UCL"/>
</dbReference>
<dbReference type="GO" id="GO:0036064">
    <property type="term" value="C:ciliary basal body"/>
    <property type="evidence" value="ECO:0007669"/>
    <property type="project" value="Ensembl"/>
</dbReference>
<dbReference type="GO" id="GO:0005737">
    <property type="term" value="C:cytoplasm"/>
    <property type="evidence" value="ECO:0000314"/>
    <property type="project" value="UniProtKB"/>
</dbReference>
<dbReference type="GO" id="GO:0010494">
    <property type="term" value="C:cytoplasmic stress granule"/>
    <property type="evidence" value="ECO:0000314"/>
    <property type="project" value="ARUK-UCL"/>
</dbReference>
<dbReference type="GO" id="GO:0005829">
    <property type="term" value="C:cytosol"/>
    <property type="evidence" value="ECO:0000314"/>
    <property type="project" value="MGI"/>
</dbReference>
<dbReference type="GO" id="GO:0030425">
    <property type="term" value="C:dendrite"/>
    <property type="evidence" value="ECO:0000316"/>
    <property type="project" value="ARUK-UCL"/>
</dbReference>
<dbReference type="GO" id="GO:0005794">
    <property type="term" value="C:Golgi apparatus"/>
    <property type="evidence" value="ECO:0007669"/>
    <property type="project" value="Ensembl"/>
</dbReference>
<dbReference type="GO" id="GO:0043025">
    <property type="term" value="C:neuronal cell body"/>
    <property type="evidence" value="ECO:0000316"/>
    <property type="project" value="ARUK-UCL"/>
</dbReference>
<dbReference type="GO" id="GO:0016607">
    <property type="term" value="C:nuclear speck"/>
    <property type="evidence" value="ECO:0007669"/>
    <property type="project" value="Ensembl"/>
</dbReference>
<dbReference type="GO" id="GO:0005654">
    <property type="term" value="C:nucleoplasm"/>
    <property type="evidence" value="ECO:0000304"/>
    <property type="project" value="Reactome"/>
</dbReference>
<dbReference type="GO" id="GO:0031588">
    <property type="term" value="C:nucleotide-activated protein kinase complex"/>
    <property type="evidence" value="ECO:0000266"/>
    <property type="project" value="ComplexPortal"/>
</dbReference>
<dbReference type="GO" id="GO:0005634">
    <property type="term" value="C:nucleus"/>
    <property type="evidence" value="ECO:0000314"/>
    <property type="project" value="MGI"/>
</dbReference>
<dbReference type="GO" id="GO:0047322">
    <property type="term" value="F:[hydroxymethylglutaryl-CoA reductase (NADPH)] kinase activity"/>
    <property type="evidence" value="ECO:0007669"/>
    <property type="project" value="UniProtKB-EC"/>
</dbReference>
<dbReference type="GO" id="GO:0004679">
    <property type="term" value="F:AMP-activated protein kinase activity"/>
    <property type="evidence" value="ECO:0000314"/>
    <property type="project" value="UniProtKB"/>
</dbReference>
<dbReference type="GO" id="GO:0005524">
    <property type="term" value="F:ATP binding"/>
    <property type="evidence" value="ECO:0007669"/>
    <property type="project" value="UniProtKB-KW"/>
</dbReference>
<dbReference type="GO" id="GO:0003682">
    <property type="term" value="F:chromatin binding"/>
    <property type="evidence" value="ECO:0000314"/>
    <property type="project" value="UniProtKB"/>
</dbReference>
<dbReference type="GO" id="GO:0140823">
    <property type="term" value="F:histone H2BS36 kinase activity"/>
    <property type="evidence" value="ECO:0000314"/>
    <property type="project" value="UniProtKB"/>
</dbReference>
<dbReference type="GO" id="GO:0046872">
    <property type="term" value="F:metal ion binding"/>
    <property type="evidence" value="ECO:0007669"/>
    <property type="project" value="UniProtKB-KW"/>
</dbReference>
<dbReference type="GO" id="GO:0106310">
    <property type="term" value="F:protein serine kinase activity"/>
    <property type="evidence" value="ECO:0007669"/>
    <property type="project" value="RHEA"/>
</dbReference>
<dbReference type="GO" id="GO:0004674">
    <property type="term" value="F:protein serine/threonine kinase activity"/>
    <property type="evidence" value="ECO:0000314"/>
    <property type="project" value="UniProtKB"/>
</dbReference>
<dbReference type="GO" id="GO:0004712">
    <property type="term" value="F:protein serine/threonine/tyrosine kinase activity"/>
    <property type="evidence" value="ECO:0000266"/>
    <property type="project" value="MGI"/>
</dbReference>
<dbReference type="GO" id="GO:0006914">
    <property type="term" value="P:autophagy"/>
    <property type="evidence" value="ECO:0007669"/>
    <property type="project" value="UniProtKB-KW"/>
</dbReference>
<dbReference type="GO" id="GO:0071277">
    <property type="term" value="P:cellular response to calcium ion"/>
    <property type="evidence" value="ECO:0000316"/>
    <property type="project" value="ARUK-UCL"/>
</dbReference>
<dbReference type="GO" id="GO:0042149">
    <property type="term" value="P:cellular response to glucose starvation"/>
    <property type="evidence" value="ECO:0000314"/>
    <property type="project" value="UniProtKB"/>
</dbReference>
<dbReference type="GO" id="GO:0071333">
    <property type="term" value="P:cellular response to glucose stimulus"/>
    <property type="evidence" value="ECO:0000316"/>
    <property type="project" value="ARUK-UCL"/>
</dbReference>
<dbReference type="GO" id="GO:0031669">
    <property type="term" value="P:cellular response to nutrient levels"/>
    <property type="evidence" value="ECO:0000314"/>
    <property type="project" value="UniProtKB"/>
</dbReference>
<dbReference type="GO" id="GO:0034599">
    <property type="term" value="P:cellular response to oxidative stress"/>
    <property type="evidence" value="ECO:0000316"/>
    <property type="project" value="ARUK-UCL"/>
</dbReference>
<dbReference type="GO" id="GO:0071380">
    <property type="term" value="P:cellular response to prostaglandin E stimulus"/>
    <property type="evidence" value="ECO:0000316"/>
    <property type="project" value="MGI"/>
</dbReference>
<dbReference type="GO" id="GO:0071466">
    <property type="term" value="P:cellular response to xenobiotic stimulus"/>
    <property type="evidence" value="ECO:0000315"/>
    <property type="project" value="MGI"/>
</dbReference>
<dbReference type="GO" id="GO:0006695">
    <property type="term" value="P:cholesterol biosynthetic process"/>
    <property type="evidence" value="ECO:0007669"/>
    <property type="project" value="UniProtKB-KW"/>
</dbReference>
<dbReference type="GO" id="GO:0097009">
    <property type="term" value="P:energy homeostasis"/>
    <property type="evidence" value="ECO:0000250"/>
    <property type="project" value="UniProtKB"/>
</dbReference>
<dbReference type="GO" id="GO:0006633">
    <property type="term" value="P:fatty acid biosynthetic process"/>
    <property type="evidence" value="ECO:0007669"/>
    <property type="project" value="UniProtKB-KW"/>
</dbReference>
<dbReference type="GO" id="GO:0055089">
    <property type="term" value="P:fatty acid homeostasis"/>
    <property type="evidence" value="ECO:0000250"/>
    <property type="project" value="UniProtKB"/>
</dbReference>
<dbReference type="GO" id="GO:0042593">
    <property type="term" value="P:glucose homeostasis"/>
    <property type="evidence" value="ECO:0000315"/>
    <property type="project" value="UniProtKB"/>
</dbReference>
<dbReference type="GO" id="GO:0008610">
    <property type="term" value="P:lipid biosynthetic process"/>
    <property type="evidence" value="ECO:0000314"/>
    <property type="project" value="UniProtKB"/>
</dbReference>
<dbReference type="GO" id="GO:1905691">
    <property type="term" value="P:lipid droplet disassembly"/>
    <property type="evidence" value="ECO:0007669"/>
    <property type="project" value="Ensembl"/>
</dbReference>
<dbReference type="GO" id="GO:0043066">
    <property type="term" value="P:negative regulation of apoptotic process"/>
    <property type="evidence" value="ECO:0000315"/>
    <property type="project" value="UniProtKB"/>
</dbReference>
<dbReference type="GO" id="GO:0010629">
    <property type="term" value="P:negative regulation of gene expression"/>
    <property type="evidence" value="ECO:0000316"/>
    <property type="project" value="ARUK-UCL"/>
</dbReference>
<dbReference type="GO" id="GO:1903944">
    <property type="term" value="P:negative regulation of hepatocyte apoptotic process"/>
    <property type="evidence" value="ECO:0007669"/>
    <property type="project" value="Ensembl"/>
</dbReference>
<dbReference type="GO" id="GO:0032007">
    <property type="term" value="P:negative regulation of TOR signaling"/>
    <property type="evidence" value="ECO:0000315"/>
    <property type="project" value="UniProtKB"/>
</dbReference>
<dbReference type="GO" id="GO:1904262">
    <property type="term" value="P:negative regulation of TORC1 signaling"/>
    <property type="evidence" value="ECO:0000314"/>
    <property type="project" value="UniProtKB"/>
</dbReference>
<dbReference type="GO" id="GO:1904428">
    <property type="term" value="P:negative regulation of tubulin deacetylation"/>
    <property type="evidence" value="ECO:0000316"/>
    <property type="project" value="ARUK-UCL"/>
</dbReference>
<dbReference type="GO" id="GO:0010508">
    <property type="term" value="P:positive regulation of autophagy"/>
    <property type="evidence" value="ECO:0000315"/>
    <property type="project" value="UniProtKB"/>
</dbReference>
<dbReference type="GO" id="GO:0045821">
    <property type="term" value="P:positive regulation of glycolytic process"/>
    <property type="evidence" value="ECO:0000250"/>
    <property type="project" value="UniProtKB"/>
</dbReference>
<dbReference type="GO" id="GO:1903829">
    <property type="term" value="P:positive regulation of protein localization"/>
    <property type="evidence" value="ECO:0000316"/>
    <property type="project" value="ARUK-UCL"/>
</dbReference>
<dbReference type="GO" id="GO:1990044">
    <property type="term" value="P:protein localization to lipid droplet"/>
    <property type="evidence" value="ECO:0000314"/>
    <property type="project" value="UniProtKB"/>
</dbReference>
<dbReference type="GO" id="GO:0006468">
    <property type="term" value="P:protein phosphorylation"/>
    <property type="evidence" value="ECO:0000314"/>
    <property type="project" value="UniProtKB"/>
</dbReference>
<dbReference type="GO" id="GO:0042752">
    <property type="term" value="P:regulation of circadian rhythm"/>
    <property type="evidence" value="ECO:0000315"/>
    <property type="project" value="UniProtKB"/>
</dbReference>
<dbReference type="GO" id="GO:0010468">
    <property type="term" value="P:regulation of gene expression"/>
    <property type="evidence" value="ECO:0000315"/>
    <property type="project" value="MGI"/>
</dbReference>
<dbReference type="GO" id="GO:0016241">
    <property type="term" value="P:regulation of macroautophagy"/>
    <property type="evidence" value="ECO:0000314"/>
    <property type="project" value="UniProtKB"/>
</dbReference>
<dbReference type="GO" id="GO:0070507">
    <property type="term" value="P:regulation of microtubule cytoskeleton organization"/>
    <property type="evidence" value="ECO:0000316"/>
    <property type="project" value="ARUK-UCL"/>
</dbReference>
<dbReference type="GO" id="GO:0062028">
    <property type="term" value="P:regulation of stress granule assembly"/>
    <property type="evidence" value="ECO:0000316"/>
    <property type="project" value="ARUK-UCL"/>
</dbReference>
<dbReference type="GO" id="GO:0014850">
    <property type="term" value="P:response to muscle activity"/>
    <property type="evidence" value="ECO:0000315"/>
    <property type="project" value="MGI"/>
</dbReference>
<dbReference type="GO" id="GO:0048511">
    <property type="term" value="P:rhythmic process"/>
    <property type="evidence" value="ECO:0007669"/>
    <property type="project" value="UniProtKB-KW"/>
</dbReference>
<dbReference type="GO" id="GO:0016055">
    <property type="term" value="P:Wnt signaling pathway"/>
    <property type="evidence" value="ECO:0007669"/>
    <property type="project" value="UniProtKB-KW"/>
</dbReference>
<dbReference type="CDD" id="cd14079">
    <property type="entry name" value="STKc_AMPK_alpha"/>
    <property type="match status" value="1"/>
</dbReference>
<dbReference type="CDD" id="cd14404">
    <property type="entry name" value="UBA_AID_AAPK2"/>
    <property type="match status" value="1"/>
</dbReference>
<dbReference type="FunFam" id="1.10.510.10:FF:000079">
    <property type="entry name" value="Non-specific serine/threonine protein kinase"/>
    <property type="match status" value="1"/>
</dbReference>
<dbReference type="FunFam" id="1.10.8.10:FF:000014">
    <property type="entry name" value="Non-specific serine/threonine protein kinase"/>
    <property type="match status" value="1"/>
</dbReference>
<dbReference type="FunFam" id="3.30.200.20:FF:000136">
    <property type="entry name" value="Non-specific serine/threonine protein kinase"/>
    <property type="match status" value="1"/>
</dbReference>
<dbReference type="FunFam" id="3.30.310.80:FF:000003">
    <property type="entry name" value="Non-specific serine/threonine protein kinase"/>
    <property type="match status" value="1"/>
</dbReference>
<dbReference type="Gene3D" id="1.10.8.10">
    <property type="entry name" value="DNA helicase RuvA subunit, C-terminal domain"/>
    <property type="match status" value="1"/>
</dbReference>
<dbReference type="Gene3D" id="3.30.310.80">
    <property type="entry name" value="Kinase associated domain 1, KA1"/>
    <property type="match status" value="1"/>
</dbReference>
<dbReference type="Gene3D" id="3.30.200.20">
    <property type="entry name" value="Phosphorylase Kinase, domain 1"/>
    <property type="match status" value="1"/>
</dbReference>
<dbReference type="Gene3D" id="1.10.510.10">
    <property type="entry name" value="Transferase(Phosphotransferase) domain 1"/>
    <property type="match status" value="1"/>
</dbReference>
<dbReference type="InterPro" id="IPR032270">
    <property type="entry name" value="AMPK_C"/>
</dbReference>
<dbReference type="InterPro" id="IPR028375">
    <property type="entry name" value="KA1/Ssp2_C"/>
</dbReference>
<dbReference type="InterPro" id="IPR011009">
    <property type="entry name" value="Kinase-like_dom_sf"/>
</dbReference>
<dbReference type="InterPro" id="IPR049020">
    <property type="entry name" value="PRKAA1/2_AID"/>
</dbReference>
<dbReference type="InterPro" id="IPR028783">
    <property type="entry name" value="PRKAA2"/>
</dbReference>
<dbReference type="InterPro" id="IPR000719">
    <property type="entry name" value="Prot_kinase_dom"/>
</dbReference>
<dbReference type="InterPro" id="IPR017441">
    <property type="entry name" value="Protein_kinase_ATP_BS"/>
</dbReference>
<dbReference type="InterPro" id="IPR008271">
    <property type="entry name" value="Ser/Thr_kinase_AS"/>
</dbReference>
<dbReference type="PANTHER" id="PTHR24346:SF104">
    <property type="entry name" value="5'-AMP-ACTIVATED PROTEIN KINASE CATALYTIC SUBUNIT ALPHA-2"/>
    <property type="match status" value="1"/>
</dbReference>
<dbReference type="PANTHER" id="PTHR24346">
    <property type="entry name" value="MAP/MICROTUBULE AFFINITY-REGULATING KINASE"/>
    <property type="match status" value="1"/>
</dbReference>
<dbReference type="Pfam" id="PF16579">
    <property type="entry name" value="AdenylateSensor"/>
    <property type="match status" value="1"/>
</dbReference>
<dbReference type="Pfam" id="PF21147">
    <property type="entry name" value="AMPK_alpha_AID"/>
    <property type="match status" value="1"/>
</dbReference>
<dbReference type="Pfam" id="PF00069">
    <property type="entry name" value="Pkinase"/>
    <property type="match status" value="1"/>
</dbReference>
<dbReference type="SMART" id="SM00220">
    <property type="entry name" value="S_TKc"/>
    <property type="match status" value="1"/>
</dbReference>
<dbReference type="SUPFAM" id="SSF103243">
    <property type="entry name" value="KA1-like"/>
    <property type="match status" value="1"/>
</dbReference>
<dbReference type="SUPFAM" id="SSF56112">
    <property type="entry name" value="Protein kinase-like (PK-like)"/>
    <property type="match status" value="1"/>
</dbReference>
<dbReference type="PROSITE" id="PS00107">
    <property type="entry name" value="PROTEIN_KINASE_ATP"/>
    <property type="match status" value="1"/>
</dbReference>
<dbReference type="PROSITE" id="PS50011">
    <property type="entry name" value="PROTEIN_KINASE_DOM"/>
    <property type="match status" value="1"/>
</dbReference>
<dbReference type="PROSITE" id="PS00108">
    <property type="entry name" value="PROTEIN_KINASE_ST"/>
    <property type="match status" value="1"/>
</dbReference>
<name>AAPK2_MOUSE</name>
<reference key="1">
    <citation type="journal article" date="2009" name="PLoS Biol.">
        <title>Lineage-specific biology revealed by a finished genome assembly of the mouse.</title>
        <authorList>
            <person name="Church D.M."/>
            <person name="Goodstadt L."/>
            <person name="Hillier L.W."/>
            <person name="Zody M.C."/>
            <person name="Goldstein S."/>
            <person name="She X."/>
            <person name="Bult C.J."/>
            <person name="Agarwala R."/>
            <person name="Cherry J.L."/>
            <person name="DiCuccio M."/>
            <person name="Hlavina W."/>
            <person name="Kapustin Y."/>
            <person name="Meric P."/>
            <person name="Maglott D."/>
            <person name="Birtle Z."/>
            <person name="Marques A.C."/>
            <person name="Graves T."/>
            <person name="Zhou S."/>
            <person name="Teague B."/>
            <person name="Potamousis K."/>
            <person name="Churas C."/>
            <person name="Place M."/>
            <person name="Herschleb J."/>
            <person name="Runnheim R."/>
            <person name="Forrest D."/>
            <person name="Amos-Landgraf J."/>
            <person name="Schwartz D.C."/>
            <person name="Cheng Z."/>
            <person name="Lindblad-Toh K."/>
            <person name="Eichler E.E."/>
            <person name="Ponting C.P."/>
        </authorList>
    </citation>
    <scope>NUCLEOTIDE SEQUENCE [LARGE SCALE GENOMIC DNA]</scope>
    <source>
        <strain>C57BL/6J</strain>
    </source>
</reference>
<reference key="2">
    <citation type="journal article" date="2004" name="Genome Res.">
        <title>The status, quality, and expansion of the NIH full-length cDNA project: the Mammalian Gene Collection (MGC).</title>
        <authorList>
            <consortium name="The MGC Project Team"/>
        </authorList>
    </citation>
    <scope>NUCLEOTIDE SEQUENCE [LARGE SCALE MRNA]</scope>
    <source>
        <tissue>Brain</tissue>
    </source>
</reference>
<reference evidence="29 30" key="3">
    <citation type="journal article" date="2005" name="Science">
        <title>The transcriptional landscape of the mammalian genome.</title>
        <authorList>
            <person name="Carninci P."/>
            <person name="Kasukawa T."/>
            <person name="Katayama S."/>
            <person name="Gough J."/>
            <person name="Frith M.C."/>
            <person name="Maeda N."/>
            <person name="Oyama R."/>
            <person name="Ravasi T."/>
            <person name="Lenhard B."/>
            <person name="Wells C."/>
            <person name="Kodzius R."/>
            <person name="Shimokawa K."/>
            <person name="Bajic V.B."/>
            <person name="Brenner S.E."/>
            <person name="Batalov S."/>
            <person name="Forrest A.R."/>
            <person name="Zavolan M."/>
            <person name="Davis M.J."/>
            <person name="Wilming L.G."/>
            <person name="Aidinis V."/>
            <person name="Allen J.E."/>
            <person name="Ambesi-Impiombato A."/>
            <person name="Apweiler R."/>
            <person name="Aturaliya R.N."/>
            <person name="Bailey T.L."/>
            <person name="Bansal M."/>
            <person name="Baxter L."/>
            <person name="Beisel K.W."/>
            <person name="Bersano T."/>
            <person name="Bono H."/>
            <person name="Chalk A.M."/>
            <person name="Chiu K.P."/>
            <person name="Choudhary V."/>
            <person name="Christoffels A."/>
            <person name="Clutterbuck D.R."/>
            <person name="Crowe M.L."/>
            <person name="Dalla E."/>
            <person name="Dalrymple B.P."/>
            <person name="de Bono B."/>
            <person name="Della Gatta G."/>
            <person name="di Bernardo D."/>
            <person name="Down T."/>
            <person name="Engstrom P."/>
            <person name="Fagiolini M."/>
            <person name="Faulkner G."/>
            <person name="Fletcher C.F."/>
            <person name="Fukushima T."/>
            <person name="Furuno M."/>
            <person name="Futaki S."/>
            <person name="Gariboldi M."/>
            <person name="Georgii-Hemming P."/>
            <person name="Gingeras T.R."/>
            <person name="Gojobori T."/>
            <person name="Green R.E."/>
            <person name="Gustincich S."/>
            <person name="Harbers M."/>
            <person name="Hayashi Y."/>
            <person name="Hensch T.K."/>
            <person name="Hirokawa N."/>
            <person name="Hill D."/>
            <person name="Huminiecki L."/>
            <person name="Iacono M."/>
            <person name="Ikeo K."/>
            <person name="Iwama A."/>
            <person name="Ishikawa T."/>
            <person name="Jakt M."/>
            <person name="Kanapin A."/>
            <person name="Katoh M."/>
            <person name="Kawasawa Y."/>
            <person name="Kelso J."/>
            <person name="Kitamura H."/>
            <person name="Kitano H."/>
            <person name="Kollias G."/>
            <person name="Krishnan S.P."/>
            <person name="Kruger A."/>
            <person name="Kummerfeld S.K."/>
            <person name="Kurochkin I.V."/>
            <person name="Lareau L.F."/>
            <person name="Lazarevic D."/>
            <person name="Lipovich L."/>
            <person name="Liu J."/>
            <person name="Liuni S."/>
            <person name="McWilliam S."/>
            <person name="Madan Babu M."/>
            <person name="Madera M."/>
            <person name="Marchionni L."/>
            <person name="Matsuda H."/>
            <person name="Matsuzawa S."/>
            <person name="Miki H."/>
            <person name="Mignone F."/>
            <person name="Miyake S."/>
            <person name="Morris K."/>
            <person name="Mottagui-Tabar S."/>
            <person name="Mulder N."/>
            <person name="Nakano N."/>
            <person name="Nakauchi H."/>
            <person name="Ng P."/>
            <person name="Nilsson R."/>
            <person name="Nishiguchi S."/>
            <person name="Nishikawa S."/>
            <person name="Nori F."/>
            <person name="Ohara O."/>
            <person name="Okazaki Y."/>
            <person name="Orlando V."/>
            <person name="Pang K.C."/>
            <person name="Pavan W.J."/>
            <person name="Pavesi G."/>
            <person name="Pesole G."/>
            <person name="Petrovsky N."/>
            <person name="Piazza S."/>
            <person name="Reed J."/>
            <person name="Reid J.F."/>
            <person name="Ring B.Z."/>
            <person name="Ringwald M."/>
            <person name="Rost B."/>
            <person name="Ruan Y."/>
            <person name="Salzberg S.L."/>
            <person name="Sandelin A."/>
            <person name="Schneider C."/>
            <person name="Schoenbach C."/>
            <person name="Sekiguchi K."/>
            <person name="Semple C.A."/>
            <person name="Seno S."/>
            <person name="Sessa L."/>
            <person name="Sheng Y."/>
            <person name="Shibata Y."/>
            <person name="Shimada H."/>
            <person name="Shimada K."/>
            <person name="Silva D."/>
            <person name="Sinclair B."/>
            <person name="Sperling S."/>
            <person name="Stupka E."/>
            <person name="Sugiura K."/>
            <person name="Sultana R."/>
            <person name="Takenaka Y."/>
            <person name="Taki K."/>
            <person name="Tammoja K."/>
            <person name="Tan S.L."/>
            <person name="Tang S."/>
            <person name="Taylor M.S."/>
            <person name="Tegner J."/>
            <person name="Teichmann S.A."/>
            <person name="Ueda H.R."/>
            <person name="van Nimwegen E."/>
            <person name="Verardo R."/>
            <person name="Wei C.L."/>
            <person name="Yagi K."/>
            <person name="Yamanishi H."/>
            <person name="Zabarovsky E."/>
            <person name="Zhu S."/>
            <person name="Zimmer A."/>
            <person name="Hide W."/>
            <person name="Bult C."/>
            <person name="Grimmond S.M."/>
            <person name="Teasdale R.D."/>
            <person name="Liu E.T."/>
            <person name="Brusic V."/>
            <person name="Quackenbush J."/>
            <person name="Wahlestedt C."/>
            <person name="Mattick J.S."/>
            <person name="Hume D.A."/>
            <person name="Kai C."/>
            <person name="Sasaki D."/>
            <person name="Tomaru Y."/>
            <person name="Fukuda S."/>
            <person name="Kanamori-Katayama M."/>
            <person name="Suzuki M."/>
            <person name="Aoki J."/>
            <person name="Arakawa T."/>
            <person name="Iida J."/>
            <person name="Imamura K."/>
            <person name="Itoh M."/>
            <person name="Kato T."/>
            <person name="Kawaji H."/>
            <person name="Kawagashira N."/>
            <person name="Kawashima T."/>
            <person name="Kojima M."/>
            <person name="Kondo S."/>
            <person name="Konno H."/>
            <person name="Nakano K."/>
            <person name="Ninomiya N."/>
            <person name="Nishio T."/>
            <person name="Okada M."/>
            <person name="Plessy C."/>
            <person name="Shibata K."/>
            <person name="Shiraki T."/>
            <person name="Suzuki S."/>
            <person name="Tagami M."/>
            <person name="Waki K."/>
            <person name="Watahiki A."/>
            <person name="Okamura-Oho Y."/>
            <person name="Suzuki H."/>
            <person name="Kawai J."/>
            <person name="Hayashizaki Y."/>
        </authorList>
    </citation>
    <scope>NUCLEOTIDE SEQUENCE [LARGE SCALE MRNA] OF 15-552</scope>
    <source>
        <strain evidence="30">C57BL/6J</strain>
        <tissue evidence="30">Brain cortex</tissue>
        <tissue evidence="31">Medulla oblongata</tissue>
    </source>
</reference>
<reference evidence="29" key="4">
    <citation type="journal article" date="2004" name="Diabetes">
        <title>Induced adiposity and adipocyte hypertrophy in mice lacking the AMP-activated protein kinase-alpha2 subunit.</title>
        <authorList>
            <person name="Villena J.A."/>
            <person name="Viollet B."/>
            <person name="Andreelli F."/>
            <person name="Kahn A."/>
            <person name="Vaulont S."/>
            <person name="Sul H.S."/>
        </authorList>
    </citation>
    <scope>FUNCTION</scope>
    <scope>DISRUPTION PHENOTYPE</scope>
</reference>
<reference key="5">
    <citation type="journal article" date="2004" name="Diabetes">
        <title>The alpha2-5'AMP-activated protein kinase is a site 2 glycogen synthase kinase in skeletal muscle and is responsive to glucose loading.</title>
        <authorList>
            <person name="Jorgensen S.B."/>
            <person name="Nielsen J.N."/>
            <person name="Birk J.B."/>
            <person name="Olsen G.S."/>
            <person name="Viollet B."/>
            <person name="Andreelli F."/>
            <person name="Schjerling P."/>
            <person name="Vaulont S."/>
            <person name="Hardie D.G."/>
            <person name="Hansen B.F."/>
            <person name="Richter E.A."/>
            <person name="Wojtaszewski J.F."/>
        </authorList>
    </citation>
    <scope>FUNCTION IN PHOSPHORYLATION OF GYS1</scope>
</reference>
<reference key="6">
    <citation type="journal article" date="2005" name="J. Biol. Chem.">
        <title>The Ca2+/calmodulin-dependent protein kinase kinases are AMP-activated protein kinase kinases.</title>
        <authorList>
            <person name="Hurley R.L."/>
            <person name="Anderson K.A."/>
            <person name="Franzone J.M."/>
            <person name="Kemp B.E."/>
            <person name="Means A.R."/>
            <person name="Witters L.A."/>
        </authorList>
    </citation>
    <scope>PHOSPHORYLATION AT THR-172</scope>
    <scope>ACTIVITY REGULATION</scope>
</reference>
<reference key="7">
    <citation type="journal article" date="2005" name="Nature">
        <title>The CREB coactivator TORC2 is a key regulator of fasting glucose metabolism.</title>
        <authorList>
            <person name="Koo S.-H."/>
            <person name="Flechner L."/>
            <person name="Qi L."/>
            <person name="Zhang X."/>
            <person name="Screaton R.A."/>
            <person name="Jeffries S."/>
            <person name="Hedrick S."/>
            <person name="Xu W."/>
            <person name="Boussouar F."/>
            <person name="Brindle P."/>
            <person name="Takemori H."/>
            <person name="Montminy M."/>
        </authorList>
    </citation>
    <scope>FUNCTION IN PHOSPHORYLATION OF CRTC2</scope>
</reference>
<reference key="8">
    <citation type="journal article" date="2005" name="Science">
        <title>The kinase LKB1 mediates glucose homeostasis in liver and therapeutic effects of metformin.</title>
        <authorList>
            <person name="Shaw R.J."/>
            <person name="Lamia K.A."/>
            <person name="Vasquez D."/>
            <person name="Koo S.-H."/>
            <person name="Bardeesy N."/>
            <person name="Depinho R.A."/>
            <person name="Montminy M."/>
            <person name="Cantley L.C."/>
        </authorList>
    </citation>
    <scope>FUNCTION IN PHOSPHORYLATION OF CRTC2</scope>
    <scope>PHOSPHORYLATION AT THR-172</scope>
</reference>
<reference key="9">
    <citation type="journal article" date="2006" name="Diabetes">
        <title>AMPK-mediated AS160 phosphorylation in skeletal muscle is dependent on AMPK catalytic and regulatory subunits.</title>
        <authorList>
            <person name="Treebak J.T."/>
            <person name="Glund S."/>
            <person name="Deshmukh A."/>
            <person name="Klein D.K."/>
            <person name="Long Y.C."/>
            <person name="Jensen T.E."/>
            <person name="Jorgensen S.B."/>
            <person name="Viollet B."/>
            <person name="Andersson L."/>
            <person name="Neumann D."/>
            <person name="Wallimann T."/>
            <person name="Richter E.A."/>
            <person name="Chibalin A.V."/>
            <person name="Zierath J.R."/>
            <person name="Wojtaszewski J.F."/>
        </authorList>
    </citation>
    <scope>FUNCTION IN PHOSPHORYLATION OF TBC1D4</scope>
</reference>
<reference key="10">
    <citation type="journal article" date="2006" name="Diabetes">
        <title>Distinct signals regulate AS160 phosphorylation in response to insulin, AICAR, and contraction in mouse skeletal muscle.</title>
        <authorList>
            <person name="Kramer H.F."/>
            <person name="Witczak C.A."/>
            <person name="Fujii N."/>
            <person name="Jessen N."/>
            <person name="Taylor E.B."/>
            <person name="Arnolds D.E."/>
            <person name="Sakamoto K."/>
            <person name="Hirshman M.F."/>
            <person name="Goodyear L.J."/>
        </authorList>
    </citation>
    <scope>FUNCTION IN PHOSPHORYLATION OF TBC1D4</scope>
</reference>
<reference key="11">
    <citation type="journal article" date="2007" name="Proc. Natl. Acad. Sci. U.S.A.">
        <title>AMP-activated protein kinase (AMPK) action in skeletal muscle via direct phosphorylation of PGC-1alpha.</title>
        <authorList>
            <person name="Jager S."/>
            <person name="Handschin C."/>
            <person name="St-Pierre J."/>
            <person name="Spiegelman B.M."/>
        </authorList>
    </citation>
    <scope>FUNCTION IN PHOSPHORYLATION OF PPARGC1A</scope>
</reference>
<reference key="12">
    <citation type="journal article" date="2007" name="Proc. Natl. Acad. Sci. U.S.A.">
        <title>Large-scale phosphorylation analysis of mouse liver.</title>
        <authorList>
            <person name="Villen J."/>
            <person name="Beausoleil S.A."/>
            <person name="Gerber S.A."/>
            <person name="Gygi S.P."/>
        </authorList>
    </citation>
    <scope>PHOSPHORYLATION [LARGE SCALE ANALYSIS] AT SER-377</scope>
    <scope>IDENTIFICATION BY MASS SPECTROMETRY [LARGE SCALE ANALYSIS]</scope>
    <source>
        <tissue>Liver</tissue>
    </source>
</reference>
<reference key="13">
    <citation type="journal article" date="2008" name="Biochem. J.">
        <title>Control of AMPK-related kinases by USP9X and atypical Lys(29)/Lys(33)-linked polyubiquitin chains.</title>
        <authorList>
            <person name="Al-Hakim A.K."/>
            <person name="Zagorska A."/>
            <person name="Chapman L."/>
            <person name="Deak M."/>
            <person name="Peggie M."/>
            <person name="Alessi D.R."/>
        </authorList>
    </citation>
    <scope>UBIQUITINATION</scope>
</reference>
<reference key="14">
    <citation type="journal article" date="2008" name="Mol. Cell">
        <title>AMPK phosphorylation of raptor mediates a metabolic checkpoint.</title>
        <authorList>
            <person name="Gwinn D.M."/>
            <person name="Shackelford D.B."/>
            <person name="Egan D.F."/>
            <person name="Mihaylova M.M."/>
            <person name="Mery A."/>
            <person name="Vasquez D.S."/>
            <person name="Turk B.E."/>
            <person name="Shaw R.J."/>
        </authorList>
    </citation>
    <scope>FUNCTION IN PHOSPHORYLATION OF RPTOR</scope>
</reference>
<reference key="15">
    <citation type="journal article" date="2009" name="Science">
        <title>AMPK regulates the circadian clock by cryptochrome phosphorylation and degradation.</title>
        <authorList>
            <person name="Lamia K.A."/>
            <person name="Sachdeva U.M."/>
            <person name="DiTacchio L."/>
            <person name="Williams E.C."/>
            <person name="Alvarez J.G."/>
            <person name="Egan D.F."/>
            <person name="Vasquez D.S."/>
            <person name="Juguilon H."/>
            <person name="Panda S."/>
            <person name="Shaw R.J."/>
            <person name="Thompson C.B."/>
            <person name="Evans R.M."/>
        </authorList>
    </citation>
    <scope>FUNCTION IN PHOSPHORYLATION OF CRY1</scope>
</reference>
<reference key="16">
    <citation type="journal article" date="2010" name="Biochem. Biophys. Res. Commun.">
        <title>AMP-activated protein kinase (AMPK) cross-talks with canonical Wnt signaling via phosphorylation of beta-catenin at Ser 552.</title>
        <authorList>
            <person name="Zhao J."/>
            <person name="Yue W."/>
            <person name="Zhu M.J."/>
            <person name="Sreejayan N."/>
            <person name="Du M."/>
        </authorList>
    </citation>
    <scope>FUNCTION IN PHOSPHORYLATION OF CTNNB1</scope>
</reference>
<reference key="17">
    <citation type="journal article" date="2010" name="Cell">
        <title>A tissue-specific atlas of mouse protein phosphorylation and expression.</title>
        <authorList>
            <person name="Huttlin E.L."/>
            <person name="Jedrychowski M.P."/>
            <person name="Elias J.E."/>
            <person name="Goswami T."/>
            <person name="Rad R."/>
            <person name="Beausoleil S.A."/>
            <person name="Villen J."/>
            <person name="Haas W."/>
            <person name="Sowa M.E."/>
            <person name="Gygi S.P."/>
        </authorList>
    </citation>
    <scope>PHOSPHORYLATION [LARGE SCALE ANALYSIS] AT SER-377</scope>
    <scope>IDENTIFICATION BY MASS SPECTROMETRY [LARGE SCALE ANALYSIS]</scope>
    <source>
        <tissue>Brain</tissue>
        <tissue>Brown adipose tissue</tissue>
        <tissue>Heart</tissue>
        <tissue>Kidney</tissue>
        <tissue>Liver</tissue>
        <tissue>Pancreas</tissue>
    </source>
</reference>
<reference key="18">
    <citation type="journal article" date="2010" name="Science">
        <title>Signaling kinase AMPK activates stress-promoted transcription via histone H2B phosphorylation.</title>
        <authorList>
            <person name="Bungard D."/>
            <person name="Fuerth B.J."/>
            <person name="Zeng P.Y."/>
            <person name="Faubert B."/>
            <person name="Maas N.L."/>
            <person name="Viollet B."/>
            <person name="Carling D."/>
            <person name="Thompson C.B."/>
            <person name="Jones R.G."/>
            <person name="Berger S.L."/>
        </authorList>
    </citation>
    <scope>FUNCTION IN PHOSPHORYLATION OF H2B</scope>
    <scope>MUTAGENESIS OF ASP-157</scope>
</reference>
<reference key="19">
    <citation type="journal article" date="2011" name="J. Biol. Chem.">
        <title>AMP-activated protein kinase regulates beta-catenin transcription via histone deacetylase 5.</title>
        <authorList>
            <person name="Zhao J.X."/>
            <person name="Yue W.F."/>
            <person name="Zhu M.J."/>
            <person name="Du M."/>
        </authorList>
    </citation>
    <scope>FUNCTION IN PHOSPHORYLATION OF HDAC5</scope>
    <scope>MUTAGENESIS OF LYS-45</scope>
</reference>
<reference key="20">
    <citation type="journal article" date="2011" name="Autophagy">
        <title>Ulk1-mediated phosphorylation of AMPK constitutes a negative regulatory feedback loop.</title>
        <authorList>
            <person name="Loffler A.S."/>
            <person name="Alers S."/>
            <person name="Dieterle A.M."/>
            <person name="Keppeler H."/>
            <person name="Franz-Wachtel M."/>
            <person name="Kundu M."/>
            <person name="Campbell D.G."/>
            <person name="Wesselborg S."/>
            <person name="Alessi D.R."/>
            <person name="Stork B."/>
        </authorList>
    </citation>
    <scope>PHOSPHORYLATION BY ULK1</scope>
</reference>
<reference key="21">
    <citation type="journal article" date="2011" name="Cell Metab.">
        <title>AMPK phosphorylates and inhibits SREBP activity to attenuate hepatic steatosis and atherosclerosis in diet-induced insulin-resistant mice.</title>
        <authorList>
            <person name="Li Y."/>
            <person name="Xu S."/>
            <person name="Mihaylova M.M."/>
            <person name="Zheng B."/>
            <person name="Hou X."/>
            <person name="Jiang B."/>
            <person name="Park O."/>
            <person name="Luo Z."/>
            <person name="Lefai E."/>
            <person name="Shyy J.Y."/>
            <person name="Gao B."/>
            <person name="Wierzbicki M."/>
            <person name="Verbeuren T.J."/>
            <person name="Shaw R.J."/>
            <person name="Cohen R.A."/>
            <person name="Zang M."/>
        </authorList>
    </citation>
    <scope>FUNCTION IN PHOSPHORYLATION OF SREBF1 AND SREBF2</scope>
    <scope>ACTIVITY REGULATION</scope>
</reference>
<reference key="22">
    <citation type="journal article" date="2011" name="Nat. Cell Biol.">
        <title>AMPK and mTOR regulate autophagy through direct phosphorylation of Ulk1.</title>
        <authorList>
            <person name="Kim J."/>
            <person name="Kundu M."/>
            <person name="Viollet B."/>
            <person name="Guan K.L."/>
        </authorList>
    </citation>
    <scope>FUNCTION IN PHOSPHORYLATION OF ULK1</scope>
</reference>
<reference key="23">
    <citation type="journal article" date="2011" name="Science">
        <title>Phosphorylation of ULK1 (hATG1) by AMP-activated protein kinase connects energy sensing to mitophagy.</title>
        <authorList>
            <person name="Egan D.F."/>
            <person name="Shackelford D.B."/>
            <person name="Mihaylova M.M."/>
            <person name="Gelino S."/>
            <person name="Kohnz R.A."/>
            <person name="Mair W."/>
            <person name="Vasquez D.S."/>
            <person name="Joshi A."/>
            <person name="Gwinn D.M."/>
            <person name="Taylor R."/>
            <person name="Asara J.M."/>
            <person name="Fitzpatrick J."/>
            <person name="Dillin A."/>
            <person name="Viollet B."/>
            <person name="Kundu M."/>
            <person name="Hansen M."/>
            <person name="Shaw R.J."/>
        </authorList>
    </citation>
    <scope>FUNCTION IN PHOSPHORYLATION OF ULK1</scope>
</reference>
<reference key="24">
    <citation type="journal article" date="2012" name="Science">
        <title>The ancient drug salicylate directly activates AMP-activated protein kinase.</title>
        <authorList>
            <person name="Hawley S.A."/>
            <person name="Fullerton M.D."/>
            <person name="Ross F.A."/>
            <person name="Schertzer J.D."/>
            <person name="Chevtzoff C."/>
            <person name="Walker K.J."/>
            <person name="Peggie M.W."/>
            <person name="Zibrova D."/>
            <person name="Green K.A."/>
            <person name="Mustard K.J."/>
            <person name="Kemp B.E."/>
            <person name="Sakamoto K."/>
            <person name="Steinberg G.R."/>
            <person name="Hardie D.G."/>
        </authorList>
    </citation>
    <scope>ACTIVITY REGULATION BY SALICYLATE</scope>
</reference>
<reference key="25">
    <citation type="journal article" date="2013" name="Cell">
        <title>Differential regulation of distinct Vps34 complexes by AMPK in nutrient stress and autophagy.</title>
        <authorList>
            <person name="Kim J."/>
            <person name="Kim Y.C."/>
            <person name="Fang C."/>
            <person name="Russell R.C."/>
            <person name="Kim J.H."/>
            <person name="Fan W."/>
            <person name="Liu R."/>
            <person name="Zhong Q."/>
            <person name="Guan K.L."/>
        </authorList>
    </citation>
    <scope>FUNCTION</scope>
    <scope>PHOSPHORYLATION AT THR-172</scope>
    <scope>ACTIVITY REGULATION</scope>
</reference>
<reference key="26">
    <citation type="journal article" date="2018" name="Diabetes">
        <title>H19 lncRNA Promotes Skeletal Muscle Insulin Sensitivity in Part by Targeting AMPK.</title>
        <authorList>
            <person name="Geng T."/>
            <person name="Liu Y."/>
            <person name="Xu Y."/>
            <person name="Jiang Y."/>
            <person name="Zhang N."/>
            <person name="Wang Z."/>
            <person name="Carmichael G.G."/>
            <person name="Taylor H.S."/>
            <person name="Li D."/>
            <person name="Huang Y."/>
        </authorList>
    </citation>
    <scope>INTERACTION WITH DUSP29</scope>
    <scope>PHOSPHORYLATION AT THR-172</scope>
    <scope>SUBCELLULAR LOCATION</scope>
</reference>
<reference key="27">
    <citation type="journal article" date="2020" name="Genes Dev.">
        <title>AMPK regulation of Raptor and TSC2 mediate metformin effects on transcriptional control of anabolism and inflammation.</title>
        <authorList>
            <person name="Van Nostrand J.L."/>
            <person name="Hellberg K."/>
            <person name="Luo E.C."/>
            <person name="Van Nostrand E.L."/>
            <person name="Dayn A."/>
            <person name="Yu J."/>
            <person name="Shokhirev M.N."/>
            <person name="Dayn Y."/>
            <person name="Yeo G.W."/>
            <person name="Shaw R.J."/>
        </authorList>
    </citation>
    <scope>FUNCTION</scope>
</reference>
<reference key="28">
    <citation type="journal article" date="2021" name="Mol. Cell">
        <title>Choline kinase alpha 2 acts as a protein kinase to promote lipolysis of lipid droplets.</title>
        <authorList>
            <person name="Liu R."/>
            <person name="Lee J.H."/>
            <person name="Li J."/>
            <person name="Yu R."/>
            <person name="Tan L."/>
            <person name="Xia Y."/>
            <person name="Zheng Y."/>
            <person name="Bian X.L."/>
            <person name="Lorenzi P.L."/>
            <person name="Chen Q."/>
            <person name="Lu Z."/>
        </authorList>
    </citation>
    <scope>FUNCTION</scope>
    <scope>CATALYTIC ACTIVITY</scope>
</reference>
<keyword id="KW-0067">ATP-binding</keyword>
<keyword id="KW-0072">Autophagy</keyword>
<keyword id="KW-0090">Biological rhythms</keyword>
<keyword id="KW-0152">Cholesterol biosynthesis</keyword>
<keyword id="KW-0153">Cholesterol metabolism</keyword>
<keyword id="KW-0156">Chromatin regulator</keyword>
<keyword id="KW-0963">Cytoplasm</keyword>
<keyword id="KW-0275">Fatty acid biosynthesis</keyword>
<keyword id="KW-0276">Fatty acid metabolism</keyword>
<keyword id="KW-0418">Kinase</keyword>
<keyword id="KW-0444">Lipid biosynthesis</keyword>
<keyword id="KW-0443">Lipid metabolism</keyword>
<keyword id="KW-0460">Magnesium</keyword>
<keyword id="KW-0479">Metal-binding</keyword>
<keyword id="KW-0547">Nucleotide-binding</keyword>
<keyword id="KW-0539">Nucleus</keyword>
<keyword id="KW-0597">Phosphoprotein</keyword>
<keyword id="KW-1185">Reference proteome</keyword>
<keyword id="KW-0723">Serine/threonine-protein kinase</keyword>
<keyword id="KW-0752">Steroid biosynthesis</keyword>
<keyword id="KW-0753">Steroid metabolism</keyword>
<keyword id="KW-0756">Sterol biosynthesis</keyword>
<keyword id="KW-1207">Sterol metabolism</keyword>
<keyword id="KW-0804">Transcription</keyword>
<keyword id="KW-0805">Transcription regulation</keyword>
<keyword id="KW-0808">Transferase</keyword>
<keyword id="KW-0832">Ubl conjugation</keyword>
<keyword id="KW-0879">Wnt signaling pathway</keyword>
<accession>Q8BRK8</accession>
<accession>B1ASQ8</accession>
<accession>Q3UYM4</accession>
<comment type="function">
    <text evidence="2 3 7 8 10 11 12 13 14 16 17 18 19 20 21 22 23 25 27 28">Catalytic subunit of AMP-activated protein kinase (AMPK), an energy sensor protein kinase that plays a key role in regulating cellular energy metabolism (By similarity). In response to reduction of intracellular ATP levels, AMPK activates energy-producing pathways and inhibits energy-consuming processes: inhibits protein, carbohydrate and lipid biosynthesis, as well as cell growth and proliferation (By similarity). AMPK acts via direct phosphorylation of metabolic enzymes, and by longer-term effects via phosphorylation of transcription regulators (By similarity). Regulates lipid synthesis by phosphorylating and inactivating lipid metabolic enzymes such as ACACA, ACACB, GYS1, HMGCR and LIPE; regulates fatty acid and cholesterol synthesis by phosphorylating acetyl-CoA carboxylase (ACACA and ACACB) and hormone-sensitive lipase (LIPE) enzymes, respectively (PubMed:15331533, PubMed:15561936). Promotes lipolysis of lipid droplets by mediating phosphorylation of isoform 1 of CHKA (CHKalpha2) (PubMed:34077757). Regulates insulin-signaling and glycolysis by phosphorylating IRS1, PFKFB2 and PFKFB3 (By similarity). Involved in insulin receptor/INSR internalization (By similarity). AMPK stimulates glucose uptake in muscle by increasing the translocation of the glucose transporter SLC2A4/GLUT4 to the plasma membrane, possibly by mediating phosphorylation of TBC1D4/AS160 (PubMed:16804075, PubMed:16804077). Regulates transcription and chromatin structure by phosphorylating transcription regulators involved in energy metabolism such as CRTC2/TORC2, FOXO3, histone H2B, HDAC5, MEF2C, MLXIPL/ChREBP, EP300, HNF4A, p53/TP53, SREBF1, SREBF2 and PPARGC1A (PubMed:17609368, PubMed:20647423, PubMed:21454484, PubMed:21459323). Acts as a key regulator of glucose homeostasis in liver by phosphorylating CRTC2/TORC2, leading to CRTC2/TORC2 sequestration in the cytoplasm (PubMed:16148943, PubMed:16308421). In response to stress, phosphorylates 'Ser-36' of histone H2B (H2BS36ph), leading to promote transcription (PubMed:20647423). Acts as a key regulator of cell growth and proliferation by phosphorylating FNIP1, TSC2, RPTOR, WDR24 and ATG1/ULK1: in response to nutrient limitation, negatively regulates the mTORC1 complex by phosphorylating RPTOR component of the mTORC1 complex and by phosphorylating and activating TSC2 (PubMed:18439900, PubMed:21205641, PubMed:21258367, PubMed:32912901). Also phosphorylates and inhibits GATOR2 subunit WDR24 in response to nutrient limitation, leading to suppress glucose-mediated mTORC1 activation (By similarity). In response to energetic stress, phosphorylates FNIP1, inactivating the non-canonical mTORC1 signaling, thereby promoting nuclear translocation of TFEB and TFE3, and inducing transcription of lysosomal or autophagy genes (By similarity). In response to nutrient limitation, promotes autophagy by phosphorylating and activating ATG1/ULK1 (PubMed:21205641, PubMed:21258367). In that process, it also activates WDR45/WIPI4 (By similarity). Phosphorylates CASP6, thereby preventing its autoprocessing and subsequent activation (By similarity). AMPK also acts as a regulator of circadian rhythm by mediating phosphorylation of CRY1, leading to destabilize it (PubMed:19833968). May regulate the Wnt signaling pathway by phosphorylating CTNNB1, leading to stabilize it (PubMed:20361929). Also acts as a regulator of cellular polarity by remodeling the actin cytoskeleton; probably by indirectly activating myosin (By similarity). Also phosphorylates CFTR, EEF2K, KLC1, NOS3 and SLC12A1 (By similarity). Plays an important role in the differential regulation of pro-autophagy (composed of PIK3C3, BECN1, PIK3R4 and UVRAG or ATG14) and non-autophagy (composed of PIK3C3, BECN1 and PIK3R4) complexes, in response to glucose starvation (PubMed:23332761). Can inhibit the non-autophagy complex by phosphorylating PIK3C3 and can activate the pro-autophagy complex by phosphorylating BECN1 (PubMed:23332761). Upon glucose starvation, promotes ARF6 activation in a kinase-independent manner leading to cell migration (By similarity). Upon glucose deprivation mediates the phosphorylation of ACSS2 at 'Ser-659', which exposes the nuclear localization signal of ACSS2, required for its interaction with KPNA1 and nuclear translocation (By similarity). Upon stress, regulates mitochondrial fragmentation through phosphorylation of MTFR1L (By similarity).</text>
</comment>
<comment type="catalytic activity">
    <reaction evidence="28">
        <text>L-seryl-[protein] + ATP = O-phospho-L-seryl-[protein] + ADP + H(+)</text>
        <dbReference type="Rhea" id="RHEA:17989"/>
        <dbReference type="Rhea" id="RHEA-COMP:9863"/>
        <dbReference type="Rhea" id="RHEA-COMP:11604"/>
        <dbReference type="ChEBI" id="CHEBI:15378"/>
        <dbReference type="ChEBI" id="CHEBI:29999"/>
        <dbReference type="ChEBI" id="CHEBI:30616"/>
        <dbReference type="ChEBI" id="CHEBI:83421"/>
        <dbReference type="ChEBI" id="CHEBI:456216"/>
        <dbReference type="EC" id="2.7.11.1"/>
    </reaction>
</comment>
<comment type="catalytic activity">
    <reaction evidence="3">
        <text>L-threonyl-[protein] + ATP = O-phospho-L-threonyl-[protein] + ADP + H(+)</text>
        <dbReference type="Rhea" id="RHEA:46608"/>
        <dbReference type="Rhea" id="RHEA-COMP:11060"/>
        <dbReference type="Rhea" id="RHEA-COMP:11605"/>
        <dbReference type="ChEBI" id="CHEBI:15378"/>
        <dbReference type="ChEBI" id="CHEBI:30013"/>
        <dbReference type="ChEBI" id="CHEBI:30616"/>
        <dbReference type="ChEBI" id="CHEBI:61977"/>
        <dbReference type="ChEBI" id="CHEBI:456216"/>
        <dbReference type="EC" id="2.7.11.1"/>
    </reaction>
</comment>
<comment type="catalytic activity">
    <reaction evidence="3">
        <text>L-seryl-[acetyl-CoA carboxylase] + ATP = O-phospho-L-seryl-[acetyl-CoA carboxylase] + ADP + H(+)</text>
        <dbReference type="Rhea" id="RHEA:20333"/>
        <dbReference type="Rhea" id="RHEA-COMP:13722"/>
        <dbReference type="Rhea" id="RHEA-COMP:13723"/>
        <dbReference type="ChEBI" id="CHEBI:15378"/>
        <dbReference type="ChEBI" id="CHEBI:29999"/>
        <dbReference type="ChEBI" id="CHEBI:30616"/>
        <dbReference type="ChEBI" id="CHEBI:83421"/>
        <dbReference type="ChEBI" id="CHEBI:456216"/>
    </reaction>
</comment>
<comment type="catalytic activity">
    <reaction evidence="3">
        <text>L-seryl-[3-hydroxy-3-methylglutaryl-coenzyme A reductase] + ATP = O-phospho-L-seryl-[3-hydroxy-3-methylglutaryl-coenzyme A reductase] + ADP + H(+)</text>
        <dbReference type="Rhea" id="RHEA:23172"/>
        <dbReference type="Rhea" id="RHEA-COMP:13692"/>
        <dbReference type="Rhea" id="RHEA-COMP:13693"/>
        <dbReference type="ChEBI" id="CHEBI:15378"/>
        <dbReference type="ChEBI" id="CHEBI:29999"/>
        <dbReference type="ChEBI" id="CHEBI:30616"/>
        <dbReference type="ChEBI" id="CHEBI:83421"/>
        <dbReference type="ChEBI" id="CHEBI:456216"/>
        <dbReference type="EC" id="2.7.11.31"/>
    </reaction>
</comment>
<comment type="cofactor">
    <cofactor evidence="29">
        <name>Mg(2+)</name>
        <dbReference type="ChEBI" id="CHEBI:18420"/>
    </cofactor>
</comment>
<comment type="activity regulation">
    <text evidence="9 23 24 25">Activated by phosphorylation on Thr-172. Binding of AMP to non-catalytic gamma subunit (PRKAG1, PRKAG2 or PRKAG3) results in allosteric activation, inducing phosphorylation on Thr-172. AMP-binding to gamma subunit also sustains activity by preventing dephosphorylation of Thr-172. ADP also stimulates Thr-172 phosphorylation, without stimulating already phosphorylated AMPK. ATP promotes dephosphorylation of Thr-172, rendering the enzyme inactive. Under physiological conditions AMPK mainly exists in its inactive form in complex with ATP, which is much more abundant than AMP. Selectively inhibited by compound C (6-[4-(2-Piperidin-1-yl-ethoxy)-phenyl)]-3-pyridin-4-yl-pyyrazolo[1,5-a] pyrimidine. Activated by resveratrol, a natural polyphenol present in red wine, and S17834, a synthetic polyphenol. Salicylate/aspirin directly activates kinase activity, primarily by inhibiting Thr-172 dephosphorylation.</text>
</comment>
<comment type="subunit">
    <text evidence="2 26">AMPK is a heterotrimer of an alpha catalytic subunit (PRKAA1 or PRKAA2), a beta (PRKAB1 or PRKAB2) and a gamma non-catalytic subunits (PRKAG1, PRKAG2 or PRKAG3). Interacts with FNIP1 and FNIP2 (By similarity). Interacts with DUSP29 (PubMed:30201684). Interacts with ARF6 (By similarity). The phosphorylated form at Thr-172 mediated by CamKK2 interacts with ACSS2 (By similarity).</text>
</comment>
<comment type="subcellular location">
    <subcellularLocation>
        <location evidence="26">Cytoplasm</location>
    </subcellularLocation>
    <subcellularLocation>
        <location evidence="2">Nucleus</location>
    </subcellularLocation>
    <text>In response to stress, recruited by p53/TP53 to specific promoters.</text>
</comment>
<comment type="domain">
    <text evidence="4">The AIS (autoinhibitory sequence) region shows some sequence similarity with the ubiquitin-associated domains and represses kinase activity.</text>
</comment>
<comment type="PTM">
    <text evidence="15">Ubiquitinated.</text>
</comment>
<comment type="PTM">
    <text evidence="2">Phosphorylated at Thr-172 by STK11/LKB1 in complex with STE20-related adapter-alpha (STRADA) pseudo kinase and CAB39. Also phosphorylated at Thr-172 by CAMKK2; triggered by a rise in intracellular calcium ions, without detectable changes in the AMP/ATP ratio. CAMKK1 can also phosphorylate Thr-172, but at much lower level. Dephosphorylated by protein phosphatase 2A and 2C (PP2A and PP2C). Phosphorylated by ULK1; leading to negatively regulate AMPK activity and suggesting the existence of a regulatory feedback loop between ULK1 and AMPK. Dephosphorylated by PPM1A and PPM1B at Thr-172 (mediated by STK11/LKB1) (By similarity).</text>
</comment>
<comment type="disruption phenotype">
    <text evidence="7">Mice develop obesity when animals are fed a high-fat diet, as a result of an enhanced lipid accumulation in pre-existing adipocytes but not in other tissues.</text>
</comment>
<comment type="similarity">
    <text evidence="29">Belongs to the protein kinase superfamily. CAMK Ser/Thr protein kinase family. SNF1 subfamily.</text>
</comment>
<protein>
    <recommendedName>
        <fullName>5'-AMP-activated protein kinase catalytic subunit alpha-2</fullName>
        <shortName>AMPK subunit alpha-2</shortName>
        <ecNumber evidence="3">2.7.11.1</ecNumber>
    </recommendedName>
    <alternativeName>
        <fullName>Acetyl-CoA carboxylase kinase</fullName>
        <shortName>ACACA kinase</shortName>
    </alternativeName>
    <alternativeName>
        <fullName>Hydroxymethylglutaryl-CoA reductase kinase</fullName>
        <shortName>HMGCR kinase</shortName>
        <ecNumber evidence="3">2.7.11.31</ecNumber>
    </alternativeName>
</protein>
<organism>
    <name type="scientific">Mus musculus</name>
    <name type="common">Mouse</name>
    <dbReference type="NCBI Taxonomy" id="10090"/>
    <lineage>
        <taxon>Eukaryota</taxon>
        <taxon>Metazoa</taxon>
        <taxon>Chordata</taxon>
        <taxon>Craniata</taxon>
        <taxon>Vertebrata</taxon>
        <taxon>Euteleostomi</taxon>
        <taxon>Mammalia</taxon>
        <taxon>Eutheria</taxon>
        <taxon>Euarchontoglires</taxon>
        <taxon>Glires</taxon>
        <taxon>Rodentia</taxon>
        <taxon>Myomorpha</taxon>
        <taxon>Muroidea</taxon>
        <taxon>Muridae</taxon>
        <taxon>Murinae</taxon>
        <taxon>Mus</taxon>
        <taxon>Mus</taxon>
    </lineage>
</organism>